<reference key="1">
    <citation type="journal article" date="1999" name="J. Bacteriol.">
        <title>Characterization of the serogroup O11 O-antigen locus of Pseudomonas aeruginosa PA103.</title>
        <authorList>
            <person name="Dean C.R."/>
            <person name="Franklund C.V."/>
            <person name="Retief J.D."/>
            <person name="Coyne M.J. Jr."/>
            <person name="Hatano K."/>
            <person name="Evans D.J."/>
            <person name="Pier G.B."/>
            <person name="Goldberg J.B."/>
        </authorList>
    </citation>
    <scope>NUCLEOTIDE SEQUENCE [GENOMIC DNA]</scope>
    <source>
        <strain>ATCC 29260 / BCRC 12902 / CIP 102967 / NCIMB 11965 / PA103</strain>
    </source>
</reference>
<reference key="2">
    <citation type="submission" date="2014-01" db="EMBL/GenBank/DDBJ databases">
        <title>Characterization of the core and accessory genome of Pseudomonas aeruginosa.</title>
        <authorList>
            <person name="Ozer E.A."/>
            <person name="Allen J.P."/>
            <person name="Hauser A.R."/>
        </authorList>
    </citation>
    <scope>NUCLEOTIDE SEQUENCE [LARGE SCALE GENOMIC DNA]</scope>
    <source>
        <strain>ATCC 29260 / BCRC 12902 / CIP 102967 / NCIMB 11965 / PA103</strain>
    </source>
</reference>
<reference key="3">
    <citation type="submission" date="2014-07" db="EMBL/GenBank/DDBJ databases">
        <title>Complete genome sequence of Pseudomonas aeruginosa NCGM1900.</title>
        <authorList>
            <person name="Tada T."/>
            <person name="Miyoshi-Akiyama T."/>
            <person name="Shimada K."/>
            <person name="Shimojima M."/>
            <person name="Kirikae T."/>
        </authorList>
    </citation>
    <scope>NUCLEOTIDE SEQUENCE [LARGE SCALE GENOMIC DNA]</scope>
    <source>
        <strain>NCGM 1900</strain>
    </source>
</reference>
<reference key="4">
    <citation type="journal article" date="2003" name="J. Biol. Chem.">
        <title>Three highly conserved proteins catalyze the conversion of UDP-N-acetyl-D-glucosamine to precursors for the biosynthesis of O antigen in Pseudomonas aeruginosa O11 and capsule in Staphylococcus aureus type 5. Implications for the UDP-N-acetyl-L-fucosamine biosynthetic pathway.</title>
        <authorList>
            <person name="Kneidinger B."/>
            <person name="O'Riordan K."/>
            <person name="Li J."/>
            <person name="Brisson J.R."/>
            <person name="Lee J.C."/>
            <person name="Lam J.S."/>
        </authorList>
    </citation>
    <scope>FUNCTION</scope>
    <scope>CATALYTIC ACTIVITY</scope>
    <scope>PATHWAY</scope>
</reference>
<reference key="5">
    <citation type="journal article" date="2005" name="J. Biol. Chem.">
        <title>Biosynthesis of UDP-N-acetyl-L-fucosamine, a precursor to the biosynthesis of lipopolysaccharide in Pseudomonas aeruginosa serotype O11.</title>
        <authorList>
            <person name="Mulrooney E.F."/>
            <person name="Poon K.K."/>
            <person name="McNally D.J."/>
            <person name="Brisson J.R."/>
            <person name="Lam J.S."/>
        </authorList>
    </citation>
    <scope>FUNCTION</scope>
    <scope>CATALYTIC ACTIVITY</scope>
    <scope>BIOPHYSICOCHEMICAL PROPERTIES</scope>
</reference>
<accession>Q9XC60</accession>
<accession>A0A022PF25</accession>
<proteinExistence type="evidence at protein level"/>
<protein>
    <recommendedName>
        <fullName evidence="10">UDP-2-acetamido-2,6-beta-L-arabino-hexul-4-ose reductase</fullName>
        <ecNumber evidence="4 5">1.1.1.367</ecNumber>
    </recommendedName>
</protein>
<evidence type="ECO:0000250" key="1">
    <source>
        <dbReference type="UniProtKB" id="P09147"/>
    </source>
</evidence>
<evidence type="ECO:0000250" key="2">
    <source>
        <dbReference type="UniProtKB" id="P26391"/>
    </source>
</evidence>
<evidence type="ECO:0000250" key="3">
    <source>
        <dbReference type="UniProtKB" id="Q93VR3"/>
    </source>
</evidence>
<evidence type="ECO:0000269" key="4">
    <source>
    </source>
</evidence>
<evidence type="ECO:0000269" key="5">
    <source>
    </source>
</evidence>
<evidence type="ECO:0000303" key="6">
    <source>
    </source>
</evidence>
<evidence type="ECO:0000303" key="7">
    <source>
    </source>
</evidence>
<evidence type="ECO:0000303" key="8">
    <source>
    </source>
</evidence>
<evidence type="ECO:0000305" key="9"/>
<evidence type="ECO:0000305" key="10">
    <source>
    </source>
</evidence>
<evidence type="ECO:0000312" key="11">
    <source>
        <dbReference type="EMBL" id="EYU08748.1"/>
    </source>
</evidence>
<dbReference type="EC" id="1.1.1.367" evidence="4 5"/>
<dbReference type="EMBL" id="AF147795">
    <property type="protein sequence ID" value="AAD45266.1"/>
    <property type="molecule type" value="Genomic_DNA"/>
</dbReference>
<dbReference type="EMBL" id="JARI01000007">
    <property type="protein sequence ID" value="EYU08748.1"/>
    <property type="molecule type" value="Genomic_DNA"/>
</dbReference>
<dbReference type="EMBL" id="AP014622">
    <property type="protein sequence ID" value="BAP22247.1"/>
    <property type="molecule type" value="Genomic_DNA"/>
</dbReference>
<dbReference type="RefSeq" id="WP_003091436.1">
    <property type="nucleotide sequence ID" value="NZ_KK111590.1"/>
</dbReference>
<dbReference type="SMR" id="Q9XC60"/>
<dbReference type="KEGG" id="paeb:NCGM1900_3148"/>
<dbReference type="PATRIC" id="fig|1081927.4.peg.190"/>
<dbReference type="HOGENOM" id="CLU_063221_0_0_6"/>
<dbReference type="UniPathway" id="UPA00281"/>
<dbReference type="GO" id="GO:0016491">
    <property type="term" value="F:oxidoreductase activity"/>
    <property type="evidence" value="ECO:0007669"/>
    <property type="project" value="UniProtKB-KW"/>
</dbReference>
<dbReference type="GO" id="GO:0009243">
    <property type="term" value="P:O antigen biosynthetic process"/>
    <property type="evidence" value="ECO:0000314"/>
    <property type="project" value="UniProtKB"/>
</dbReference>
<dbReference type="CDD" id="cd07007">
    <property type="entry name" value="cupin_CapF-like_C"/>
    <property type="match status" value="1"/>
</dbReference>
<dbReference type="Gene3D" id="2.60.120.10">
    <property type="entry name" value="Jelly Rolls"/>
    <property type="match status" value="1"/>
</dbReference>
<dbReference type="Gene3D" id="3.40.50.720">
    <property type="entry name" value="NAD(P)-binding Rossmann-like Domain"/>
    <property type="match status" value="1"/>
</dbReference>
<dbReference type="InterPro" id="IPR029303">
    <property type="entry name" value="CapF_C"/>
</dbReference>
<dbReference type="InterPro" id="IPR001509">
    <property type="entry name" value="Epimerase_deHydtase"/>
</dbReference>
<dbReference type="InterPro" id="IPR050177">
    <property type="entry name" value="Lipid_A_modif_metabolic_enz"/>
</dbReference>
<dbReference type="InterPro" id="IPR036291">
    <property type="entry name" value="NAD(P)-bd_dom_sf"/>
</dbReference>
<dbReference type="InterPro" id="IPR014710">
    <property type="entry name" value="RmlC-like_jellyroll"/>
</dbReference>
<dbReference type="InterPro" id="IPR011051">
    <property type="entry name" value="RmlC_Cupin_sf"/>
</dbReference>
<dbReference type="NCBIfam" id="NF047837">
    <property type="entry name" value="UDPAcbARedWbcJ"/>
    <property type="match status" value="1"/>
</dbReference>
<dbReference type="PANTHER" id="PTHR43245">
    <property type="entry name" value="BIFUNCTIONAL POLYMYXIN RESISTANCE PROTEIN ARNA"/>
    <property type="match status" value="1"/>
</dbReference>
<dbReference type="PANTHER" id="PTHR43245:SF55">
    <property type="entry name" value="NAD(P)-BINDING DOMAIN-CONTAINING PROTEIN"/>
    <property type="match status" value="1"/>
</dbReference>
<dbReference type="Pfam" id="PF01370">
    <property type="entry name" value="Epimerase"/>
    <property type="match status" value="1"/>
</dbReference>
<dbReference type="Pfam" id="PF14667">
    <property type="entry name" value="Polysacc_synt_C"/>
    <property type="match status" value="1"/>
</dbReference>
<dbReference type="SUPFAM" id="SSF51735">
    <property type="entry name" value="NAD(P)-binding Rossmann-fold domains"/>
    <property type="match status" value="1"/>
</dbReference>
<dbReference type="SUPFAM" id="SSF51182">
    <property type="entry name" value="RmlC-like cupins"/>
    <property type="match status" value="1"/>
</dbReference>
<gene>
    <name evidence="6" type="primary">wbjC</name>
    <name evidence="11" type="ORF">PA103_0193</name>
</gene>
<feature type="chain" id="PRO_0000430726" description="UDP-2-acetamido-2,6-beta-L-arabino-hexul-4-ose reductase">
    <location>
        <begin position="1"/>
        <end position="372"/>
    </location>
</feature>
<feature type="active site" description="Proton acceptor" evidence="2">
    <location>
        <position position="103"/>
    </location>
</feature>
<feature type="binding site" evidence="3">
    <location>
        <begin position="7"/>
        <end position="30"/>
    </location>
    <ligand>
        <name>NAD(+)</name>
        <dbReference type="ChEBI" id="CHEBI:57540"/>
    </ligand>
</feature>
<feature type="binding site" evidence="2">
    <location>
        <position position="53"/>
    </location>
    <ligand>
        <name>NAD(+)</name>
        <dbReference type="ChEBI" id="CHEBI:57540"/>
    </ligand>
</feature>
<feature type="binding site" evidence="3">
    <location>
        <position position="103"/>
    </location>
    <ligand>
        <name>NAD(+)</name>
        <dbReference type="ChEBI" id="CHEBI:57540"/>
    </ligand>
</feature>
<feature type="binding site" evidence="3">
    <location>
        <position position="107"/>
    </location>
    <ligand>
        <name>NAD(+)</name>
        <dbReference type="ChEBI" id="CHEBI:57540"/>
    </ligand>
</feature>
<feature type="binding site" evidence="2">
    <location>
        <position position="132"/>
    </location>
    <ligand>
        <name>substrate</name>
    </ligand>
</feature>
<feature type="binding site" evidence="2">
    <location>
        <begin position="279"/>
        <end position="282"/>
    </location>
    <ligand>
        <name>substrate</name>
    </ligand>
</feature>
<organism>
    <name type="scientific">Pseudomonas aeruginosa (strain ATCC 29260 / BCRC 12902 / CIP 102967 / NCIMB 11965 / PA103)</name>
    <dbReference type="NCBI Taxonomy" id="1081927"/>
    <lineage>
        <taxon>Bacteria</taxon>
        <taxon>Pseudomonadati</taxon>
        <taxon>Pseudomonadota</taxon>
        <taxon>Gammaproteobacteria</taxon>
        <taxon>Pseudomonadales</taxon>
        <taxon>Pseudomonadaceae</taxon>
        <taxon>Pseudomonas</taxon>
    </lineage>
</organism>
<comment type="function">
    <text evidence="4 5">Bifunctional enzyme that mediates C-3 epimerization of the second intermediate followed by reduction at C-4 during serogroup O11 O-antigen biosynthesis, thus catalyzing the conversion of UDP-N-acetyl-D-glucosamine to precursors for the biosynthesis of O antigen.</text>
</comment>
<comment type="catalytic activity">
    <reaction evidence="4 5">
        <text>UDP-2-acetamido-2,6-dideoxy-beta-L-arabino-hex-4-ulose + NADH + H(+) = UDP-2-acetamido-2,6-dideoxy-beta-L-talose + NAD(+)</text>
        <dbReference type="Rhea" id="RHEA:40159"/>
        <dbReference type="ChEBI" id="CHEBI:15378"/>
        <dbReference type="ChEBI" id="CHEBI:57540"/>
        <dbReference type="ChEBI" id="CHEBI:57945"/>
        <dbReference type="ChEBI" id="CHEBI:60101"/>
        <dbReference type="ChEBI" id="CHEBI:62372"/>
        <dbReference type="EC" id="1.1.1.367"/>
    </reaction>
</comment>
<comment type="catalytic activity">
    <reaction evidence="4 5">
        <text>UDP-2-acetamido-2,6-dideoxy-beta-L-arabino-hex-4-ulose + NADPH + H(+) = UDP-2-acetamido-2,6-dideoxy-beta-L-talose + NADP(+)</text>
        <dbReference type="Rhea" id="RHEA:30835"/>
        <dbReference type="ChEBI" id="CHEBI:15378"/>
        <dbReference type="ChEBI" id="CHEBI:57783"/>
        <dbReference type="ChEBI" id="CHEBI:58349"/>
        <dbReference type="ChEBI" id="CHEBI:60101"/>
        <dbReference type="ChEBI" id="CHEBI:62372"/>
        <dbReference type="EC" id="1.1.1.367"/>
    </reaction>
</comment>
<comment type="biophysicochemical properties">
    <phDependence>
        <text evidence="8">Optimum pH is 9.</text>
    </phDependence>
</comment>
<comment type="pathway">
    <text evidence="7">Bacterial outer membrane biogenesis; LPS O-antigen biosynthesis.</text>
</comment>
<comment type="subunit">
    <text evidence="1">Homodimer.</text>
</comment>
<comment type="similarity">
    <text evidence="9">Belongs to the NAD(P)-dependent epimerase/dehydratase family.</text>
</comment>
<keyword id="KW-0520">NAD</keyword>
<keyword id="KW-0521">NADP</keyword>
<keyword id="KW-0560">Oxidoreductase</keyword>
<name>WBJC_PSEA1</name>
<sequence>MKVLVTGANGFVGRNLCAHLAERGGIEVVPFTRESSVGNLPELIRSVDFIFHLAGVNRPEKPEEFKIGNSELTYALCEAVRSNGRAIPLLYTSSIQAEVDNEYGLSKRAAEEHLQVLGEDIGCPVYIFRLPNVFGKWSRPNYNSAVATFCHNIIRDIPIQINNSSAEITLVYIDDVVRTFMKVMDGKLSNAVSLQVEPQYQISVGELAEQLYEFRNSRKSLTTARVGSGLTRALYSTYLSFLPEDSFSYDVPMHSDPRGTFVEMLKTADSGQFSFFTAHPGVTRGGHYHHSKTEKFLVIKGMARFKFRNILTGAFYEICTNGEKAEIVETVPGWTHDITNVGTDDMVVMLWANEVFDRENPDTYACSVGEGA</sequence>